<feature type="chain" id="PRO_0000232185" description="ATP-dependent RNA helicase dhh1">
    <location>
        <begin position="1"/>
        <end position="511"/>
    </location>
</feature>
<feature type="domain" description="Helicase ATP-binding" evidence="2">
    <location>
        <begin position="78"/>
        <end position="248"/>
    </location>
</feature>
<feature type="domain" description="Helicase C-terminal" evidence="3">
    <location>
        <begin position="258"/>
        <end position="418"/>
    </location>
</feature>
<feature type="region of interest" description="Disordered" evidence="4">
    <location>
        <begin position="1"/>
        <end position="39"/>
    </location>
</feature>
<feature type="region of interest" description="Disordered" evidence="4">
    <location>
        <begin position="436"/>
        <end position="511"/>
    </location>
</feature>
<feature type="short sequence motif" description="Q motif">
    <location>
        <begin position="47"/>
        <end position="75"/>
    </location>
</feature>
<feature type="short sequence motif" description="DEAD box">
    <location>
        <begin position="196"/>
        <end position="199"/>
    </location>
</feature>
<feature type="compositionally biased region" description="Polar residues" evidence="4">
    <location>
        <begin position="7"/>
        <end position="18"/>
    </location>
</feature>
<feature type="compositionally biased region" description="Basic and acidic residues" evidence="4">
    <location>
        <begin position="19"/>
        <end position="38"/>
    </location>
</feature>
<feature type="compositionally biased region" description="Polar residues" evidence="4">
    <location>
        <begin position="436"/>
        <end position="449"/>
    </location>
</feature>
<feature type="compositionally biased region" description="Gly residues" evidence="4">
    <location>
        <begin position="467"/>
        <end position="477"/>
    </location>
</feature>
<feature type="compositionally biased region" description="Polar residues" evidence="4">
    <location>
        <begin position="483"/>
        <end position="511"/>
    </location>
</feature>
<feature type="binding site" evidence="2">
    <location>
        <begin position="91"/>
        <end position="98"/>
    </location>
    <ligand>
        <name>ATP</name>
        <dbReference type="ChEBI" id="CHEBI:30616"/>
    </ligand>
</feature>
<comment type="function">
    <text evidence="1">ATP-dependent RNA helicase involved in mRNA turnover, and more specifically in mRNA decapping by activating the decapping enzyme DCP1. Is involved in G1/S DNA-damage checkpoint recovery, probably through the regulation of the translational status of a subset of mRNAs. May also have a role in translation and mRNA nuclear export (By similarity).</text>
</comment>
<comment type="catalytic activity">
    <reaction>
        <text>ATP + H2O = ADP + phosphate + H(+)</text>
        <dbReference type="Rhea" id="RHEA:13065"/>
        <dbReference type="ChEBI" id="CHEBI:15377"/>
        <dbReference type="ChEBI" id="CHEBI:15378"/>
        <dbReference type="ChEBI" id="CHEBI:30616"/>
        <dbReference type="ChEBI" id="CHEBI:43474"/>
        <dbReference type="ChEBI" id="CHEBI:456216"/>
        <dbReference type="EC" id="3.6.4.13"/>
    </reaction>
</comment>
<comment type="subcellular location">
    <subcellularLocation>
        <location evidence="1">Cytoplasm</location>
        <location evidence="1">P-body</location>
    </subcellularLocation>
    <text evidence="1">Is concentrated in several cytoplasmic foci called P bodies (or cytoplasmic processing bodies) which represent sites of mRNA decapping and 5' to 3' exonucleotidic decay.</text>
</comment>
<comment type="domain">
    <text>The Q motif is unique to and characteristic of the DEAD box family of RNA helicases and controls ATP binding and hydrolysis.</text>
</comment>
<comment type="similarity">
    <text evidence="5">Belongs to the DEAD box helicase family. DDX6/DHH1 subfamily.</text>
</comment>
<proteinExistence type="inferred from homology"/>
<keyword id="KW-0067">ATP-binding</keyword>
<keyword id="KW-0963">Cytoplasm</keyword>
<keyword id="KW-0347">Helicase</keyword>
<keyword id="KW-0378">Hydrolase</keyword>
<keyword id="KW-0507">mRNA processing</keyword>
<keyword id="KW-0509">mRNA transport</keyword>
<keyword id="KW-0547">Nucleotide-binding</keyword>
<keyword id="KW-1185">Reference proteome</keyword>
<keyword id="KW-0694">RNA-binding</keyword>
<keyword id="KW-0810">Translation regulation</keyword>
<keyword id="KW-0813">Transport</keyword>
<dbReference type="EC" id="3.6.4.13"/>
<dbReference type="EMBL" id="BA000054">
    <property type="protein sequence ID" value="BAE63263.1"/>
    <property type="molecule type" value="Genomic_DNA"/>
</dbReference>
<dbReference type="RefSeq" id="XP_001824396.1">
    <property type="nucleotide sequence ID" value="XM_001824344.1"/>
</dbReference>
<dbReference type="SMR" id="Q2U5A2"/>
<dbReference type="STRING" id="510516.Q2U5A2"/>
<dbReference type="EnsemblFungi" id="BAE63263">
    <property type="protein sequence ID" value="BAE63263"/>
    <property type="gene ID" value="AO090020000013"/>
</dbReference>
<dbReference type="GeneID" id="5996482"/>
<dbReference type="KEGG" id="aor:AO090020000013"/>
<dbReference type="VEuPathDB" id="FungiDB:AO090020000013"/>
<dbReference type="HOGENOM" id="CLU_003041_30_1_1"/>
<dbReference type="OMA" id="TYEDRHT"/>
<dbReference type="OrthoDB" id="27113at5052"/>
<dbReference type="Proteomes" id="UP000006564">
    <property type="component" value="Chromosome 6"/>
</dbReference>
<dbReference type="GO" id="GO:0000932">
    <property type="term" value="C:P-body"/>
    <property type="evidence" value="ECO:0007669"/>
    <property type="project" value="UniProtKB-SubCell"/>
</dbReference>
<dbReference type="GO" id="GO:0005524">
    <property type="term" value="F:ATP binding"/>
    <property type="evidence" value="ECO:0007669"/>
    <property type="project" value="UniProtKB-KW"/>
</dbReference>
<dbReference type="GO" id="GO:0016887">
    <property type="term" value="F:ATP hydrolysis activity"/>
    <property type="evidence" value="ECO:0007669"/>
    <property type="project" value="RHEA"/>
</dbReference>
<dbReference type="GO" id="GO:0003723">
    <property type="term" value="F:RNA binding"/>
    <property type="evidence" value="ECO:0007669"/>
    <property type="project" value="UniProtKB-KW"/>
</dbReference>
<dbReference type="GO" id="GO:0003724">
    <property type="term" value="F:RNA helicase activity"/>
    <property type="evidence" value="ECO:0007669"/>
    <property type="project" value="UniProtKB-EC"/>
</dbReference>
<dbReference type="GO" id="GO:0006397">
    <property type="term" value="P:mRNA processing"/>
    <property type="evidence" value="ECO:0007669"/>
    <property type="project" value="UniProtKB-KW"/>
</dbReference>
<dbReference type="GO" id="GO:0051028">
    <property type="term" value="P:mRNA transport"/>
    <property type="evidence" value="ECO:0007669"/>
    <property type="project" value="UniProtKB-KW"/>
</dbReference>
<dbReference type="GO" id="GO:0006417">
    <property type="term" value="P:regulation of translation"/>
    <property type="evidence" value="ECO:0007669"/>
    <property type="project" value="UniProtKB-KW"/>
</dbReference>
<dbReference type="CDD" id="cd17940">
    <property type="entry name" value="DEADc_DDX6"/>
    <property type="match status" value="1"/>
</dbReference>
<dbReference type="CDD" id="cd18787">
    <property type="entry name" value="SF2_C_DEAD"/>
    <property type="match status" value="1"/>
</dbReference>
<dbReference type="FunFam" id="3.40.50.300:FF:000114">
    <property type="entry name" value="ATP-dependent RNA helicase DDX6"/>
    <property type="match status" value="1"/>
</dbReference>
<dbReference type="FunFam" id="3.40.50.300:FF:000364">
    <property type="entry name" value="ATP-dependent RNA helicase DDX6"/>
    <property type="match status" value="1"/>
</dbReference>
<dbReference type="Gene3D" id="3.40.50.300">
    <property type="entry name" value="P-loop containing nucleotide triphosphate hydrolases"/>
    <property type="match status" value="2"/>
</dbReference>
<dbReference type="InterPro" id="IPR011545">
    <property type="entry name" value="DEAD/DEAH_box_helicase_dom"/>
</dbReference>
<dbReference type="InterPro" id="IPR014001">
    <property type="entry name" value="Helicase_ATP-bd"/>
</dbReference>
<dbReference type="InterPro" id="IPR001650">
    <property type="entry name" value="Helicase_C-like"/>
</dbReference>
<dbReference type="InterPro" id="IPR027417">
    <property type="entry name" value="P-loop_NTPase"/>
</dbReference>
<dbReference type="InterPro" id="IPR000629">
    <property type="entry name" value="RNA-helicase_DEAD-box_CS"/>
</dbReference>
<dbReference type="InterPro" id="IPR014014">
    <property type="entry name" value="RNA_helicase_DEAD_Q_motif"/>
</dbReference>
<dbReference type="PANTHER" id="PTHR47960">
    <property type="entry name" value="DEAD-BOX ATP-DEPENDENT RNA HELICASE 50"/>
    <property type="match status" value="1"/>
</dbReference>
<dbReference type="Pfam" id="PF00270">
    <property type="entry name" value="DEAD"/>
    <property type="match status" value="1"/>
</dbReference>
<dbReference type="Pfam" id="PF00271">
    <property type="entry name" value="Helicase_C"/>
    <property type="match status" value="1"/>
</dbReference>
<dbReference type="SMART" id="SM00487">
    <property type="entry name" value="DEXDc"/>
    <property type="match status" value="1"/>
</dbReference>
<dbReference type="SMART" id="SM00490">
    <property type="entry name" value="HELICc"/>
    <property type="match status" value="1"/>
</dbReference>
<dbReference type="SUPFAM" id="SSF52540">
    <property type="entry name" value="P-loop containing nucleoside triphosphate hydrolases"/>
    <property type="match status" value="1"/>
</dbReference>
<dbReference type="PROSITE" id="PS00039">
    <property type="entry name" value="DEAD_ATP_HELICASE"/>
    <property type="match status" value="1"/>
</dbReference>
<dbReference type="PROSITE" id="PS51192">
    <property type="entry name" value="HELICASE_ATP_BIND_1"/>
    <property type="match status" value="1"/>
</dbReference>
<dbReference type="PROSITE" id="PS51194">
    <property type="entry name" value="HELICASE_CTER"/>
    <property type="match status" value="1"/>
</dbReference>
<dbReference type="PROSITE" id="PS51195">
    <property type="entry name" value="Q_MOTIF"/>
    <property type="match status" value="1"/>
</dbReference>
<organism>
    <name type="scientific">Aspergillus oryzae (strain ATCC 42149 / RIB 40)</name>
    <name type="common">Yellow koji mold</name>
    <dbReference type="NCBI Taxonomy" id="510516"/>
    <lineage>
        <taxon>Eukaryota</taxon>
        <taxon>Fungi</taxon>
        <taxon>Dikarya</taxon>
        <taxon>Ascomycota</taxon>
        <taxon>Pezizomycotina</taxon>
        <taxon>Eurotiomycetes</taxon>
        <taxon>Eurotiomycetidae</taxon>
        <taxon>Eurotiales</taxon>
        <taxon>Aspergillaceae</taxon>
        <taxon>Aspergillus</taxon>
        <taxon>Aspergillus subgen. Circumdati</taxon>
    </lineage>
</organism>
<evidence type="ECO:0000250" key="1"/>
<evidence type="ECO:0000255" key="2">
    <source>
        <dbReference type="PROSITE-ProRule" id="PRU00541"/>
    </source>
</evidence>
<evidence type="ECO:0000255" key="3">
    <source>
        <dbReference type="PROSITE-ProRule" id="PRU00542"/>
    </source>
</evidence>
<evidence type="ECO:0000256" key="4">
    <source>
        <dbReference type="SAM" id="MobiDB-lite"/>
    </source>
</evidence>
<evidence type="ECO:0000305" key="5"/>
<name>DHH1_ASPOR</name>
<protein>
    <recommendedName>
        <fullName>ATP-dependent RNA helicase dhh1</fullName>
        <ecNumber>3.6.4.13</ecNumber>
    </recommendedName>
</protein>
<gene>
    <name type="primary">dhh1</name>
    <name type="ORF">AO090020000013</name>
</gene>
<accession>Q2U5A2</accession>
<reference key="1">
    <citation type="journal article" date="2005" name="Nature">
        <title>Genome sequencing and analysis of Aspergillus oryzae.</title>
        <authorList>
            <person name="Machida M."/>
            <person name="Asai K."/>
            <person name="Sano M."/>
            <person name="Tanaka T."/>
            <person name="Kumagai T."/>
            <person name="Terai G."/>
            <person name="Kusumoto K."/>
            <person name="Arima T."/>
            <person name="Akita O."/>
            <person name="Kashiwagi Y."/>
            <person name="Abe K."/>
            <person name="Gomi K."/>
            <person name="Horiuchi H."/>
            <person name="Kitamoto K."/>
            <person name="Kobayashi T."/>
            <person name="Takeuchi M."/>
            <person name="Denning D.W."/>
            <person name="Galagan J.E."/>
            <person name="Nierman W.C."/>
            <person name="Yu J."/>
            <person name="Archer D.B."/>
            <person name="Bennett J.W."/>
            <person name="Bhatnagar D."/>
            <person name="Cleveland T.E."/>
            <person name="Fedorova N.D."/>
            <person name="Gotoh O."/>
            <person name="Horikawa H."/>
            <person name="Hosoyama A."/>
            <person name="Ichinomiya M."/>
            <person name="Igarashi R."/>
            <person name="Iwashita K."/>
            <person name="Juvvadi P.R."/>
            <person name="Kato M."/>
            <person name="Kato Y."/>
            <person name="Kin T."/>
            <person name="Kokubun A."/>
            <person name="Maeda H."/>
            <person name="Maeyama N."/>
            <person name="Maruyama J."/>
            <person name="Nagasaki H."/>
            <person name="Nakajima T."/>
            <person name="Oda K."/>
            <person name="Okada K."/>
            <person name="Paulsen I."/>
            <person name="Sakamoto K."/>
            <person name="Sawano T."/>
            <person name="Takahashi M."/>
            <person name="Takase K."/>
            <person name="Terabayashi Y."/>
            <person name="Wortman J.R."/>
            <person name="Yamada O."/>
            <person name="Yamagata Y."/>
            <person name="Anazawa H."/>
            <person name="Hata Y."/>
            <person name="Koide Y."/>
            <person name="Komori T."/>
            <person name="Koyama Y."/>
            <person name="Minetoki T."/>
            <person name="Suharnan S."/>
            <person name="Tanaka A."/>
            <person name="Isono K."/>
            <person name="Kuhara S."/>
            <person name="Ogasawara N."/>
            <person name="Kikuchi H."/>
        </authorList>
    </citation>
    <scope>NUCLEOTIDE SEQUENCE [LARGE SCALE GENOMIC DNA]</scope>
    <source>
        <strain>ATCC 42149 / RIB 40</strain>
    </source>
</reference>
<sequence length="511" mass="57438">MAEALASQLNNTTLGEASSDTRWKDQLKAPAKDARPQTEDVTATKGLEFEDFYIKRELMMGIFEAGFEKPSPIQEETIPVALTGRDILARAKNGTGKTAAFVIPTLERINPKSTKTQALILVPTRELALQTSHVCKTLGKHLGINVMVTTGGTGLMDDIIRLNDAVHILVGTPGRVLDLASKGVADLSECPTFVMDEADKLLSPEFTPVIEQLLSFHPKDRQVMLFSATFPLIVKSFKDKHMRNPYEINLMDELTLRGITQYYAFVEEKQKVHCLNTLFSKLQINQSIIFCNSTNRVELLAKKITELGYSCFYSHARMLQQHRNRVFHDFRNGVCRNLVCSDLLTRGIDIQAVNVVINFDFPKNAETYLHRIGRSGRFGHLGLAINLINWDDRFNLYKIEQELGTEIQPIPQNIDKKLYVYESPETIPRPIANASQAQLATSGNQTQNMGERRHNNHSNGGHYQFGRGRGSYRGGRSQGQRRNMQNEMNKFGTSQNQQQSGKSQPAQVSPN</sequence>